<organism>
    <name type="scientific">Acanthamoeba polyphaga mimivirus</name>
    <name type="common">APMV</name>
    <dbReference type="NCBI Taxonomy" id="212035"/>
    <lineage>
        <taxon>Viruses</taxon>
        <taxon>Varidnaviria</taxon>
        <taxon>Bamfordvirae</taxon>
        <taxon>Nucleocytoviricota</taxon>
        <taxon>Megaviricetes</taxon>
        <taxon>Imitervirales</taxon>
        <taxon>Mimiviridae</taxon>
        <taxon>Megamimivirinae</taxon>
        <taxon>Mimivirus</taxon>
        <taxon>Mimivirus bradfordmassiliense</taxon>
    </lineage>
</organism>
<reference key="1">
    <citation type="journal article" date="2004" name="Science">
        <title>The 1.2-megabase genome sequence of Mimivirus.</title>
        <authorList>
            <person name="Raoult D."/>
            <person name="Audic S."/>
            <person name="Robert C."/>
            <person name="Abergel C."/>
            <person name="Renesto P."/>
            <person name="Ogata H."/>
            <person name="La Scola B."/>
            <person name="Susan M."/>
            <person name="Claverie J.-M."/>
        </authorList>
    </citation>
    <scope>NUCLEOTIDE SEQUENCE [LARGE SCALE GENOMIC DNA]</scope>
    <source>
        <strain>Rowbotham-Bradford</strain>
    </source>
</reference>
<sequence length="226" mass="27505">METKKCSKCTEIKPIDKFYKIKNGTKIRSFCKKCDNIMSQSYKNRNKNMISSYNKKYKSKHKKQISDYNKNYNIINREKIQKRQTEQHKVRRKNDPNYKMSITLRNRIYKLLNGSNNKTTKELIGCDYNFFLKWLEFQFDDVMTFDNHGEIWHVDHVSQCNTFDLLDEEQQKLCFHWSNMRPLEKSINLGRPDERDYDDIKKHNKIVRAFLKQIKKNKEKYNFTLL</sequence>
<gene>
    <name type="ordered locus">MIMI_L246</name>
</gene>
<name>YL246_MIMIV</name>
<protein>
    <recommendedName>
        <fullName>Uncharacterized protein L246</fullName>
    </recommendedName>
</protein>
<keyword id="KW-1185">Reference proteome</keyword>
<organismHost>
    <name type="scientific">Acanthamoeba polyphaga</name>
    <name type="common">Amoeba</name>
    <dbReference type="NCBI Taxonomy" id="5757"/>
</organismHost>
<evidence type="ECO:0000305" key="1"/>
<comment type="similarity">
    <text evidence="1">Belongs to the mimivirus L246/L426 family.</text>
</comment>
<feature type="chain" id="PRO_0000071251" description="Uncharacterized protein L246">
    <location>
        <begin position="1"/>
        <end position="226"/>
    </location>
</feature>
<proteinExistence type="inferred from homology"/>
<accession>Q5UPT5</accession>
<dbReference type="EMBL" id="AY653733">
    <property type="protein sequence ID" value="AAV50518.1"/>
    <property type="molecule type" value="Genomic_DNA"/>
</dbReference>
<dbReference type="SMR" id="Q5UPT5"/>
<dbReference type="KEGG" id="vg:9924853"/>
<dbReference type="OrthoDB" id="24604at10239"/>
<dbReference type="Proteomes" id="UP000001134">
    <property type="component" value="Genome"/>
</dbReference>